<organism>
    <name type="scientific">Mus musculus</name>
    <name type="common">Mouse</name>
    <dbReference type="NCBI Taxonomy" id="10090"/>
    <lineage>
        <taxon>Eukaryota</taxon>
        <taxon>Metazoa</taxon>
        <taxon>Chordata</taxon>
        <taxon>Craniata</taxon>
        <taxon>Vertebrata</taxon>
        <taxon>Euteleostomi</taxon>
        <taxon>Mammalia</taxon>
        <taxon>Eutheria</taxon>
        <taxon>Euarchontoglires</taxon>
        <taxon>Glires</taxon>
        <taxon>Rodentia</taxon>
        <taxon>Myomorpha</taxon>
        <taxon>Muroidea</taxon>
        <taxon>Muridae</taxon>
        <taxon>Murinae</taxon>
        <taxon>Mus</taxon>
        <taxon>Mus</taxon>
    </lineage>
</organism>
<protein>
    <recommendedName>
        <fullName evidence="6">Serum amyloid A-4 protein</fullName>
    </recommendedName>
    <alternativeName>
        <fullName evidence="5">Amyloid A-5 protein</fullName>
    </alternativeName>
</protein>
<name>SAA4_MOUSE</name>
<gene>
    <name evidence="7" type="primary">Saa4</name>
    <name evidence="5" type="synonym">Saa5</name>
</gene>
<sequence length="130" mass="15088">MRLATVIVLCSLFLGVSGDGWYSFFREAVQGTWDLWRAYRDNLEANYQNADQYFYARGNYEAQQRGSGGIWAAKIISTSRKYFQGLLNRYYFGIRNHGLETLQATQKAEEWGRSGKNPNHFRPEGLPEKF</sequence>
<keyword id="KW-0011">Acute phase</keyword>
<keyword id="KW-0034">Amyloid</keyword>
<keyword id="KW-0903">Direct protein sequencing</keyword>
<keyword id="KW-0345">HDL</keyword>
<keyword id="KW-1185">Reference proteome</keyword>
<keyword id="KW-0964">Secreted</keyword>
<keyword id="KW-0732">Signal</keyword>
<accession>P31532</accession>
<feature type="signal peptide" evidence="4">
    <location>
        <begin position="1"/>
        <end position="18"/>
    </location>
</feature>
<feature type="chain" id="PRO_0000031592" description="Serum amyloid A-4 protein">
    <location>
        <begin position="19"/>
        <end position="130"/>
    </location>
</feature>
<feature type="region of interest" description="Disordered" evidence="3">
    <location>
        <begin position="109"/>
        <end position="130"/>
    </location>
</feature>
<feature type="compositionally biased region" description="Basic and acidic residues" evidence="3">
    <location>
        <begin position="121"/>
        <end position="130"/>
    </location>
</feature>
<feature type="sequence conflict" description="In Ref. 5; AA sequence." evidence="6" ref="5">
    <location>
        <position position="128"/>
    </location>
</feature>
<reference key="1">
    <citation type="journal article" date="1994" name="J. Biol. Chem.">
        <title>Mouse serum amyloid A protein (SAA5) structure and expression.</title>
        <authorList>
            <person name="de Beer M.C."/>
            <person name="Kindy M.S."/>
            <person name="Lane W.S."/>
            <person name="de Beer F.C."/>
        </authorList>
    </citation>
    <scope>NUCLEOTIDE SEQUENCE [MRNA]</scope>
    <scope>PARTIAL PROTEIN SEQUENCE</scope>
    <source>
        <strain>BALB/cJ</strain>
        <tissue>Liver</tissue>
    </source>
</reference>
<reference key="2">
    <citation type="journal article" date="1996" name="Genomics">
        <title>Structure of the mouse Saa4 gene and its linkage to the serum amyloid A gene family.</title>
        <authorList>
            <person name="de Beer M.C."/>
            <person name="de Beer F.C."/>
            <person name="Gerardot C.J."/>
            <person name="Cecil D.R."/>
            <person name="Webb N.R."/>
            <person name="Goodson M.L."/>
            <person name="Kindy M.S."/>
        </authorList>
    </citation>
    <scope>NUCLEOTIDE SEQUENCE [GENOMIC DNA]</scope>
    <source>
        <strain>BALB/cJ</strain>
    </source>
</reference>
<reference key="3">
    <citation type="journal article" date="1997" name="Scand. J. Immunol.">
        <title>Structure of the mouse serum amyloid A 5 (Saa5) gene: relationship to other members of the serum amyloid A family.</title>
        <authorList>
            <person name="Butler A."/>
            <person name="Whitehead A.S."/>
        </authorList>
    </citation>
    <scope>NUCLEOTIDE SEQUENCE [GENOMIC DNA]</scope>
    <source>
        <strain>A/J</strain>
    </source>
</reference>
<reference key="4">
    <citation type="journal article" date="2004" name="Genome Res.">
        <title>The status, quality, and expansion of the NIH full-length cDNA project: the Mammalian Gene Collection (MGC).</title>
        <authorList>
            <consortium name="The MGC Project Team"/>
        </authorList>
    </citation>
    <scope>NUCLEOTIDE SEQUENCE [LARGE SCALE MRNA]</scope>
    <source>
        <strain>FVB/N</strain>
        <tissue>Liver</tissue>
    </source>
</reference>
<reference key="5">
    <citation type="journal article" date="1991" name="Biochem. J.">
        <title>Identification of a novel serum amyloid A protein in BALB/c mice.</title>
        <authorList>
            <person name="de Beer M.C."/>
            <person name="Beach C.M."/>
            <person name="Shedlofsky S.I."/>
            <person name="de Beer F.C."/>
        </authorList>
    </citation>
    <scope>PROTEIN SEQUENCE OF 19-74 AND 96-130</scope>
    <source>
        <strain>BALB/cJ</strain>
    </source>
</reference>
<reference key="6">
    <citation type="journal article" date="2010" name="Cell">
        <title>A tissue-specific atlas of mouse protein phosphorylation and expression.</title>
        <authorList>
            <person name="Huttlin E.L."/>
            <person name="Jedrychowski M.P."/>
            <person name="Elias J.E."/>
            <person name="Goswami T."/>
            <person name="Rad R."/>
            <person name="Beausoleil S.A."/>
            <person name="Villen J."/>
            <person name="Haas W."/>
            <person name="Sowa M.E."/>
            <person name="Gygi S.P."/>
        </authorList>
    </citation>
    <scope>IDENTIFICATION BY MASS SPECTROMETRY [LARGE SCALE ANALYSIS]</scope>
    <source>
        <tissue>Brown adipose tissue</tissue>
        <tissue>Heart</tissue>
        <tissue>Kidney</tissue>
        <tissue>Lung</tissue>
        <tissue>Testis</tissue>
    </source>
</reference>
<comment type="function">
    <text evidence="1">Major acute phase reactant.</text>
</comment>
<comment type="subunit">
    <text evidence="2">Apolipoprotein of the HDL complex.</text>
</comment>
<comment type="subcellular location">
    <subcellularLocation>
        <location evidence="2">Secreted</location>
    </subcellularLocation>
</comment>
<comment type="tissue specificity">
    <text>Expressed by the liver; secreted in plasma.</text>
</comment>
<comment type="induction">
    <text>Upon cytokine stimulation.</text>
</comment>
<comment type="disease">
    <text>Reactive, secondary amyloidosis is characterized by the extracellular accumulation in various tissues of the SAA protein. These deposits are highly insoluble and resistant to proteolysis; they disrupt tissue structure and compromise function.</text>
</comment>
<comment type="similarity">
    <text evidence="6">Belongs to the SAA family.</text>
</comment>
<comment type="caution">
    <text evidence="6">SAA4 used to be called SAA5. What was SAA4 is a pseudogene which is now called SAA-ps.</text>
</comment>
<evidence type="ECO:0000250" key="1">
    <source>
        <dbReference type="UniProtKB" id="P05366"/>
    </source>
</evidence>
<evidence type="ECO:0000250" key="2">
    <source>
        <dbReference type="UniProtKB" id="P0DJI8"/>
    </source>
</evidence>
<evidence type="ECO:0000256" key="3">
    <source>
        <dbReference type="SAM" id="MobiDB-lite"/>
    </source>
</evidence>
<evidence type="ECO:0000269" key="4">
    <source>
    </source>
</evidence>
<evidence type="ECO:0000303" key="5">
    <source>
    </source>
</evidence>
<evidence type="ECO:0000305" key="6"/>
<evidence type="ECO:0000312" key="7">
    <source>
        <dbReference type="MGI" id="MGI:98224"/>
    </source>
</evidence>
<dbReference type="EMBL" id="U02554">
    <property type="protein sequence ID" value="AAA17564.1"/>
    <property type="molecule type" value="mRNA"/>
</dbReference>
<dbReference type="EMBL" id="U40397">
    <property type="protein sequence ID" value="AAC52904.1"/>
    <property type="molecule type" value="Genomic_DNA"/>
</dbReference>
<dbReference type="EMBL" id="U65403">
    <property type="protein sequence ID" value="AAB17555.1"/>
    <property type="molecule type" value="Genomic_DNA"/>
</dbReference>
<dbReference type="EMBL" id="BC019212">
    <property type="protein sequence ID" value="AAH19212.1"/>
    <property type="molecule type" value="mRNA"/>
</dbReference>
<dbReference type="CCDS" id="CCDS21283.1"/>
<dbReference type="PIR" id="A53167">
    <property type="entry name" value="A53167"/>
</dbReference>
<dbReference type="RefSeq" id="NP_035446.1">
    <property type="nucleotide sequence ID" value="NM_011316.4"/>
</dbReference>
<dbReference type="SMR" id="P31532"/>
<dbReference type="FunCoup" id="P31532">
    <property type="interactions" value="30"/>
</dbReference>
<dbReference type="STRING" id="10090.ENSMUSP00000006952"/>
<dbReference type="PhosphoSitePlus" id="P31532"/>
<dbReference type="CPTAC" id="non-CPTAC-3744"/>
<dbReference type="jPOST" id="P31532"/>
<dbReference type="PaxDb" id="10090-ENSMUSP00000006952"/>
<dbReference type="PeptideAtlas" id="P31532"/>
<dbReference type="ProteomicsDB" id="256581"/>
<dbReference type="DNASU" id="20211"/>
<dbReference type="Ensembl" id="ENSMUST00000006952.9">
    <property type="protein sequence ID" value="ENSMUSP00000006952.8"/>
    <property type="gene ID" value="ENSMUSG00000040017.9"/>
</dbReference>
<dbReference type="GeneID" id="20211"/>
<dbReference type="KEGG" id="mmu:20211"/>
<dbReference type="UCSC" id="uc009gyy.1">
    <property type="organism name" value="mouse"/>
</dbReference>
<dbReference type="AGR" id="MGI:98224"/>
<dbReference type="CTD" id="6291"/>
<dbReference type="MGI" id="MGI:98224">
    <property type="gene designation" value="Saa4"/>
</dbReference>
<dbReference type="VEuPathDB" id="HostDB:ENSMUSG00000040017"/>
<dbReference type="eggNOG" id="ENOG502S4PB">
    <property type="taxonomic scope" value="Eukaryota"/>
</dbReference>
<dbReference type="GeneTree" id="ENSGT00390000004737"/>
<dbReference type="HOGENOM" id="CLU_129936_0_0_1"/>
<dbReference type="InParanoid" id="P31532"/>
<dbReference type="OMA" id="GWFSFFK"/>
<dbReference type="OrthoDB" id="6112826at2759"/>
<dbReference type="PhylomeDB" id="P31532"/>
<dbReference type="TreeFam" id="TF332544"/>
<dbReference type="BioGRID-ORCS" id="20211">
    <property type="hits" value="1 hit in 80 CRISPR screens"/>
</dbReference>
<dbReference type="Proteomes" id="UP000000589">
    <property type="component" value="Chromosome 7"/>
</dbReference>
<dbReference type="RNAct" id="P31532">
    <property type="molecule type" value="protein"/>
</dbReference>
<dbReference type="Bgee" id="ENSMUSG00000040017">
    <property type="expression patterns" value="Expressed in left lobe of liver and 17 other cell types or tissues"/>
</dbReference>
<dbReference type="GO" id="GO:0034364">
    <property type="term" value="C:high-density lipoprotein particle"/>
    <property type="evidence" value="ECO:0007669"/>
    <property type="project" value="UniProtKB-KW"/>
</dbReference>
<dbReference type="GO" id="GO:0006953">
    <property type="term" value="P:acute-phase response"/>
    <property type="evidence" value="ECO:0007669"/>
    <property type="project" value="UniProtKB-KW"/>
</dbReference>
<dbReference type="FunFam" id="1.10.132.110:FF:000001">
    <property type="entry name" value="Serum amyloid A protein"/>
    <property type="match status" value="1"/>
</dbReference>
<dbReference type="Gene3D" id="1.10.132.110">
    <property type="entry name" value="Serum amyloid A protein"/>
    <property type="match status" value="1"/>
</dbReference>
<dbReference type="InterPro" id="IPR000096">
    <property type="entry name" value="Serum_amyloid_A"/>
</dbReference>
<dbReference type="InterPro" id="IPR052464">
    <property type="entry name" value="Synovial_Prolif_Regulator"/>
</dbReference>
<dbReference type="PANTHER" id="PTHR23424">
    <property type="entry name" value="SERUM AMYLOID A"/>
    <property type="match status" value="1"/>
</dbReference>
<dbReference type="PANTHER" id="PTHR23424:SF29">
    <property type="entry name" value="SERUM AMYLOID A PROTEIN"/>
    <property type="match status" value="1"/>
</dbReference>
<dbReference type="Pfam" id="PF00277">
    <property type="entry name" value="SAA"/>
    <property type="match status" value="1"/>
</dbReference>
<dbReference type="PIRSF" id="PIRSF002472">
    <property type="entry name" value="Serum_amyloid_A"/>
    <property type="match status" value="1"/>
</dbReference>
<dbReference type="PRINTS" id="PR00306">
    <property type="entry name" value="SERUMAMYLOID"/>
</dbReference>
<dbReference type="SMART" id="SM00197">
    <property type="entry name" value="SAA"/>
    <property type="match status" value="1"/>
</dbReference>
<dbReference type="PROSITE" id="PS00992">
    <property type="entry name" value="SAA"/>
    <property type="match status" value="1"/>
</dbReference>
<proteinExistence type="evidence at protein level"/>